<reference key="1">
    <citation type="journal article" date="1995" name="Science">
        <title>Whole-genome random sequencing and assembly of Haemophilus influenzae Rd.</title>
        <authorList>
            <person name="Fleischmann R.D."/>
            <person name="Adams M.D."/>
            <person name="White O."/>
            <person name="Clayton R.A."/>
            <person name="Kirkness E.F."/>
            <person name="Kerlavage A.R."/>
            <person name="Bult C.J."/>
            <person name="Tomb J.-F."/>
            <person name="Dougherty B.A."/>
            <person name="Merrick J.M."/>
            <person name="McKenney K."/>
            <person name="Sutton G.G."/>
            <person name="FitzHugh W."/>
            <person name="Fields C.A."/>
            <person name="Gocayne J.D."/>
            <person name="Scott J.D."/>
            <person name="Shirley R."/>
            <person name="Liu L.-I."/>
            <person name="Glodek A."/>
            <person name="Kelley J.M."/>
            <person name="Weidman J.F."/>
            <person name="Phillips C.A."/>
            <person name="Spriggs T."/>
            <person name="Hedblom E."/>
            <person name="Cotton M.D."/>
            <person name="Utterback T.R."/>
            <person name="Hanna M.C."/>
            <person name="Nguyen D.T."/>
            <person name="Saudek D.M."/>
            <person name="Brandon R.C."/>
            <person name="Fine L.D."/>
            <person name="Fritchman J.L."/>
            <person name="Fuhrmann J.L."/>
            <person name="Geoghagen N.S.M."/>
            <person name="Gnehm C.L."/>
            <person name="McDonald L.A."/>
            <person name="Small K.V."/>
            <person name="Fraser C.M."/>
            <person name="Smith H.O."/>
            <person name="Venter J.C."/>
        </authorList>
    </citation>
    <scope>NUCLEOTIDE SEQUENCE [LARGE SCALE GENOMIC DNA]</scope>
    <source>
        <strain>ATCC 51907 / DSM 11121 / KW20 / Rd</strain>
    </source>
</reference>
<reference key="2">
    <citation type="journal article" date="2000" name="Cell">
        <title>Crystal and solution structures of an HslUV protease-chaperone complex.</title>
        <authorList>
            <person name="Sousa M.C."/>
            <person name="Trame C.B."/>
            <person name="Tsuruta H."/>
            <person name="Wilbanks S.M."/>
            <person name="Reddy V.S."/>
            <person name="McKay D.B."/>
        </authorList>
    </citation>
    <scope>X-RAY CRYSTALLOGRAPHY (3.41 ANGSTROMS) OF 2-175 IN COMPLEX WITH HSLV AND ATP</scope>
</reference>
<reference key="3">
    <citation type="journal article" date="2001" name="Acta Crystallogr. D">
        <title>Structure of Haemophilus influenzae HslU protein in crystals with one-dimensional disorder twinning.</title>
        <authorList>
            <person name="Trame C.B."/>
            <person name="McKay D.B."/>
        </authorList>
    </citation>
    <scope>X-RAY CRYSTALLOGRAPHY (2.3 ANGSTROMS) IN COMPLEX WITH ADP AND SULFATE</scope>
</reference>
<reference key="4">
    <citation type="journal article" date="2003" name="J. Mol. Biol.">
        <title>Structure and reactivity of an asymmetric complex between HslV and I-domain deleted HslU, a prokaryotic homolog of the eukaryotic proteasome.</title>
        <authorList>
            <person name="Kwon A.-R."/>
            <person name="Kessler B.M."/>
            <person name="Overkleeft H.S."/>
            <person name="McKay D.B."/>
        </authorList>
    </citation>
    <scope>X-RAY CRYSTALLOGRAPHY (2.5 ANGSTROMS) OF 2-174 IN COMPLEX WITH HSLV; MAGNESIUM; ADP AND INHIBITOR</scope>
</reference>
<accession>P43773</accession>
<name>HSLU_HAEIN</name>
<dbReference type="EMBL" id="L42023">
    <property type="protein sequence ID" value="AAC22154.1"/>
    <property type="molecule type" value="Genomic_DNA"/>
</dbReference>
<dbReference type="RefSeq" id="NP_438655.1">
    <property type="nucleotide sequence ID" value="NC_000907.1"/>
</dbReference>
<dbReference type="PDB" id="1G3I">
    <property type="method" value="X-ray"/>
    <property type="resolution" value="3.41 A"/>
    <property type="chains" value="A/B/C/D/E/F/S/T/U/V/W/X=1-444"/>
</dbReference>
<dbReference type="PDB" id="1G41">
    <property type="method" value="X-ray"/>
    <property type="resolution" value="2.30 A"/>
    <property type="chains" value="A=1-444"/>
</dbReference>
<dbReference type="PDB" id="1IM2">
    <property type="method" value="X-ray"/>
    <property type="resolution" value="2.80 A"/>
    <property type="chains" value="A=1-444"/>
</dbReference>
<dbReference type="PDB" id="1KYI">
    <property type="method" value="X-ray"/>
    <property type="resolution" value="3.10 A"/>
    <property type="chains" value="A/B/C/D/E/F/S/T/U/V/W/X=1-444"/>
</dbReference>
<dbReference type="PDB" id="1OFH">
    <property type="method" value="X-ray"/>
    <property type="resolution" value="2.50 A"/>
    <property type="chains" value="A/B/C=1-107, A/B/C=244-444"/>
</dbReference>
<dbReference type="PDB" id="1OFI">
    <property type="method" value="X-ray"/>
    <property type="resolution" value="3.20 A"/>
    <property type="chains" value="A/B/C=1-107, A/B/C=244-444"/>
</dbReference>
<dbReference type="PDBsum" id="1G3I"/>
<dbReference type="PDBsum" id="1G41"/>
<dbReference type="PDBsum" id="1IM2"/>
<dbReference type="PDBsum" id="1KYI"/>
<dbReference type="PDBsum" id="1OFH"/>
<dbReference type="PDBsum" id="1OFI"/>
<dbReference type="SMR" id="P43773"/>
<dbReference type="DIP" id="DIP-6175N"/>
<dbReference type="IntAct" id="P43773">
    <property type="interactions" value="1"/>
</dbReference>
<dbReference type="STRING" id="71421.HI_0497"/>
<dbReference type="MEROPS" id="X20.005"/>
<dbReference type="EnsemblBacteria" id="AAC22154">
    <property type="protein sequence ID" value="AAC22154"/>
    <property type="gene ID" value="HI_0497"/>
</dbReference>
<dbReference type="KEGG" id="hin:HI_0497"/>
<dbReference type="PATRIC" id="fig|71421.8.peg.515"/>
<dbReference type="eggNOG" id="COG1220">
    <property type="taxonomic scope" value="Bacteria"/>
</dbReference>
<dbReference type="HOGENOM" id="CLU_033123_0_0_6"/>
<dbReference type="OrthoDB" id="9804062at2"/>
<dbReference type="PhylomeDB" id="P43773"/>
<dbReference type="BioCyc" id="HINF71421:G1GJ1-510-MONOMER"/>
<dbReference type="EvolutionaryTrace" id="P43773"/>
<dbReference type="Proteomes" id="UP000000579">
    <property type="component" value="Chromosome"/>
</dbReference>
<dbReference type="GO" id="GO:0009376">
    <property type="term" value="C:HslUV protease complex"/>
    <property type="evidence" value="ECO:0000318"/>
    <property type="project" value="GO_Central"/>
</dbReference>
<dbReference type="GO" id="GO:0005524">
    <property type="term" value="F:ATP binding"/>
    <property type="evidence" value="ECO:0000318"/>
    <property type="project" value="GO_Central"/>
</dbReference>
<dbReference type="GO" id="GO:0016887">
    <property type="term" value="F:ATP hydrolysis activity"/>
    <property type="evidence" value="ECO:0000318"/>
    <property type="project" value="GO_Central"/>
</dbReference>
<dbReference type="GO" id="GO:0008233">
    <property type="term" value="F:peptidase activity"/>
    <property type="evidence" value="ECO:0007669"/>
    <property type="project" value="InterPro"/>
</dbReference>
<dbReference type="GO" id="GO:0036402">
    <property type="term" value="F:proteasome-activating activity"/>
    <property type="evidence" value="ECO:0007669"/>
    <property type="project" value="UniProtKB-UniRule"/>
</dbReference>
<dbReference type="GO" id="GO:0043335">
    <property type="term" value="P:protein unfolding"/>
    <property type="evidence" value="ECO:0007669"/>
    <property type="project" value="UniProtKB-UniRule"/>
</dbReference>
<dbReference type="GO" id="GO:0051603">
    <property type="term" value="P:proteolysis involved in protein catabolic process"/>
    <property type="evidence" value="ECO:0000318"/>
    <property type="project" value="GO_Central"/>
</dbReference>
<dbReference type="CDD" id="cd19498">
    <property type="entry name" value="RecA-like_HslU"/>
    <property type="match status" value="1"/>
</dbReference>
<dbReference type="FunFam" id="1.10.8.10:FF:000028">
    <property type="entry name" value="ATP-dependent protease ATPase subunit HslU"/>
    <property type="match status" value="1"/>
</dbReference>
<dbReference type="FunFam" id="1.10.8.60:FF:000027">
    <property type="entry name" value="ATP-dependent protease ATPase subunit HslU"/>
    <property type="match status" value="1"/>
</dbReference>
<dbReference type="FunFam" id="3.40.50.300:FF:000213">
    <property type="entry name" value="ATP-dependent protease ATPase subunit HslU"/>
    <property type="match status" value="1"/>
</dbReference>
<dbReference type="FunFam" id="3.40.50.300:FF:000220">
    <property type="entry name" value="ATP-dependent protease ATPase subunit HslU"/>
    <property type="match status" value="1"/>
</dbReference>
<dbReference type="Gene3D" id="1.10.8.60">
    <property type="match status" value="1"/>
</dbReference>
<dbReference type="Gene3D" id="3.40.50.300">
    <property type="entry name" value="P-loop containing nucleotide triphosphate hydrolases"/>
    <property type="match status" value="2"/>
</dbReference>
<dbReference type="HAMAP" id="MF_00249">
    <property type="entry name" value="HslU"/>
    <property type="match status" value="1"/>
</dbReference>
<dbReference type="InterPro" id="IPR003593">
    <property type="entry name" value="AAA+_ATPase"/>
</dbReference>
<dbReference type="InterPro" id="IPR050052">
    <property type="entry name" value="ATP-dep_Clp_protease_ClpX"/>
</dbReference>
<dbReference type="InterPro" id="IPR003959">
    <property type="entry name" value="ATPase_AAA_core"/>
</dbReference>
<dbReference type="InterPro" id="IPR019489">
    <property type="entry name" value="Clp_ATPase_C"/>
</dbReference>
<dbReference type="InterPro" id="IPR004491">
    <property type="entry name" value="HslU"/>
</dbReference>
<dbReference type="InterPro" id="IPR027417">
    <property type="entry name" value="P-loop_NTPase"/>
</dbReference>
<dbReference type="NCBIfam" id="TIGR00390">
    <property type="entry name" value="hslU"/>
    <property type="match status" value="1"/>
</dbReference>
<dbReference type="NCBIfam" id="NF003544">
    <property type="entry name" value="PRK05201.1"/>
    <property type="match status" value="1"/>
</dbReference>
<dbReference type="PANTHER" id="PTHR48102">
    <property type="entry name" value="ATP-DEPENDENT CLP PROTEASE ATP-BINDING SUBUNIT CLPX-LIKE, MITOCHONDRIAL-RELATED"/>
    <property type="match status" value="1"/>
</dbReference>
<dbReference type="PANTHER" id="PTHR48102:SF3">
    <property type="entry name" value="ATP-DEPENDENT PROTEASE ATPASE SUBUNIT HSLU"/>
    <property type="match status" value="1"/>
</dbReference>
<dbReference type="Pfam" id="PF00004">
    <property type="entry name" value="AAA"/>
    <property type="match status" value="1"/>
</dbReference>
<dbReference type="Pfam" id="PF07724">
    <property type="entry name" value="AAA_2"/>
    <property type="match status" value="1"/>
</dbReference>
<dbReference type="SMART" id="SM00382">
    <property type="entry name" value="AAA"/>
    <property type="match status" value="1"/>
</dbReference>
<dbReference type="SMART" id="SM01086">
    <property type="entry name" value="ClpB_D2-small"/>
    <property type="match status" value="1"/>
</dbReference>
<dbReference type="SUPFAM" id="SSF52540">
    <property type="entry name" value="P-loop containing nucleoside triphosphate hydrolases"/>
    <property type="match status" value="1"/>
</dbReference>
<sequence>MSEMTPREIVSELDQHIIGQADAKRAVAIALRNRWRRMQLQEPLRHEVTPKNILMIGPTGVGKTEIARRLAKLANAPFIKVEATKFTEVGYVGKEVDSIIRDLTDSAMKLVRQQEIAKNRARAEDVAEERILDALLPPAKNQWGEVENHDSHSSTRQAFRKKLREGQLDDKEIEIDVSAGVSMGVEIMAPPGMEEMTNQLQSLFQNLGSDKTKKRKMKIKDALKALIDDEAAKLINPEELKQKAIDAVEQNGIVFIDEIDKICKKGEYSGADVSREGVQRDLLPLVEGSTVSTKHGMVKTDHILFIASGAFQVARPSDLIPELQGRLPIRVELTALSAADFERILTEPHASLTEQYKALMATEGVNIAFTTDAVKKIAEAAFRVNEKTENIGARRLHTVMERLMDKISFSASDMNGQTVNIDAAYVADALGEVVENEDLSRFIL</sequence>
<gene>
    <name type="primary">hslU</name>
    <name type="ordered locus">HI_0497</name>
</gene>
<feature type="chain" id="PRO_0000160508" description="ATP-dependent protease ATPase subunit HslU">
    <location>
        <begin position="1"/>
        <end position="444"/>
    </location>
</feature>
<feature type="region of interest" description="Disordered" evidence="2">
    <location>
        <begin position="143"/>
        <end position="163"/>
    </location>
</feature>
<feature type="binding site" evidence="3">
    <location>
        <position position="18"/>
    </location>
    <ligand>
        <name>ATP</name>
        <dbReference type="ChEBI" id="CHEBI:30616"/>
    </ligand>
</feature>
<feature type="binding site" evidence="3">
    <location>
        <begin position="60"/>
        <end position="65"/>
    </location>
    <ligand>
        <name>ATP</name>
        <dbReference type="ChEBI" id="CHEBI:30616"/>
    </ligand>
</feature>
<feature type="binding site" evidence="1">
    <location>
        <position position="257"/>
    </location>
    <ligand>
        <name>ATP</name>
        <dbReference type="ChEBI" id="CHEBI:30616"/>
    </ligand>
</feature>
<feature type="binding site" evidence="3">
    <location>
        <begin position="306"/>
        <end position="309"/>
    </location>
    <ligand>
        <name>ATP</name>
        <dbReference type="ChEBI" id="CHEBI:30616"/>
    </ligand>
</feature>
<feature type="binding site" evidence="1">
    <location>
        <position position="322"/>
    </location>
    <ligand>
        <name>ATP</name>
        <dbReference type="ChEBI" id="CHEBI:30616"/>
    </ligand>
</feature>
<feature type="binding site" evidence="1">
    <location>
        <position position="394"/>
    </location>
    <ligand>
        <name>ATP</name>
        <dbReference type="ChEBI" id="CHEBI:30616"/>
    </ligand>
</feature>
<feature type="helix" evidence="8">
    <location>
        <begin position="6"/>
        <end position="14"/>
    </location>
</feature>
<feature type="helix" evidence="8">
    <location>
        <begin position="21"/>
        <end position="39"/>
    </location>
</feature>
<feature type="turn" evidence="8">
    <location>
        <begin position="42"/>
        <end position="47"/>
    </location>
</feature>
<feature type="strand" evidence="8">
    <location>
        <begin position="53"/>
        <end position="56"/>
    </location>
</feature>
<feature type="strand" evidence="7">
    <location>
        <begin position="58"/>
        <end position="62"/>
    </location>
</feature>
<feature type="helix" evidence="8">
    <location>
        <begin position="63"/>
        <end position="73"/>
    </location>
</feature>
<feature type="strand" evidence="8">
    <location>
        <begin position="78"/>
        <end position="82"/>
    </location>
</feature>
<feature type="helix" evidence="8">
    <location>
        <begin position="83"/>
        <end position="86"/>
    </location>
</feature>
<feature type="helix" evidence="10">
    <location>
        <begin position="92"/>
        <end position="94"/>
    </location>
</feature>
<feature type="helix" evidence="8">
    <location>
        <begin position="97"/>
        <end position="117"/>
    </location>
</feature>
<feature type="strand" evidence="9">
    <location>
        <begin position="123"/>
        <end position="128"/>
    </location>
</feature>
<feature type="helix" evidence="8">
    <location>
        <begin position="228"/>
        <end position="230"/>
    </location>
</feature>
<feature type="strand" evidence="9">
    <location>
        <begin position="231"/>
        <end position="234"/>
    </location>
</feature>
<feature type="helix" evidence="8">
    <location>
        <begin position="237"/>
        <end position="251"/>
    </location>
</feature>
<feature type="strand" evidence="8">
    <location>
        <begin position="253"/>
        <end position="257"/>
    </location>
</feature>
<feature type="helix" evidence="8">
    <location>
        <begin position="259"/>
        <end position="262"/>
    </location>
</feature>
<feature type="strand" evidence="8">
    <location>
        <begin position="269"/>
        <end position="271"/>
    </location>
</feature>
<feature type="helix" evidence="8">
    <location>
        <begin position="272"/>
        <end position="287"/>
    </location>
</feature>
<feature type="strand" evidence="8">
    <location>
        <begin position="290"/>
        <end position="293"/>
    </location>
</feature>
<feature type="strand" evidence="8">
    <location>
        <begin position="296"/>
        <end position="299"/>
    </location>
</feature>
<feature type="helix" evidence="9">
    <location>
        <begin position="300"/>
        <end position="302"/>
    </location>
</feature>
<feature type="strand" evidence="8">
    <location>
        <begin position="304"/>
        <end position="309"/>
    </location>
</feature>
<feature type="strand" evidence="10">
    <location>
        <begin position="312"/>
        <end position="314"/>
    </location>
</feature>
<feature type="helix" evidence="8">
    <location>
        <begin position="316"/>
        <end position="318"/>
    </location>
</feature>
<feature type="helix" evidence="8">
    <location>
        <begin position="321"/>
        <end position="324"/>
    </location>
</feature>
<feature type="strand" evidence="8">
    <location>
        <begin position="329"/>
        <end position="332"/>
    </location>
</feature>
<feature type="helix" evidence="8">
    <location>
        <begin position="338"/>
        <end position="346"/>
    </location>
</feature>
<feature type="helix" evidence="8">
    <location>
        <begin position="352"/>
        <end position="361"/>
    </location>
</feature>
<feature type="turn" evidence="8">
    <location>
        <begin position="362"/>
        <end position="364"/>
    </location>
</feature>
<feature type="strand" evidence="8">
    <location>
        <begin position="366"/>
        <end position="369"/>
    </location>
</feature>
<feature type="helix" evidence="8">
    <location>
        <begin position="371"/>
        <end position="387"/>
    </location>
</feature>
<feature type="helix" evidence="8">
    <location>
        <begin position="392"/>
        <end position="394"/>
    </location>
</feature>
<feature type="helix" evidence="8">
    <location>
        <begin position="395"/>
        <end position="410"/>
    </location>
</feature>
<feature type="helix" evidence="8">
    <location>
        <begin position="411"/>
        <end position="413"/>
    </location>
</feature>
<feature type="strand" evidence="8">
    <location>
        <begin position="418"/>
        <end position="421"/>
    </location>
</feature>
<feature type="helix" evidence="8">
    <location>
        <begin position="423"/>
        <end position="430"/>
    </location>
</feature>
<feature type="turn" evidence="8">
    <location>
        <begin position="431"/>
        <end position="435"/>
    </location>
</feature>
<feature type="helix" evidence="8">
    <location>
        <begin position="437"/>
        <end position="443"/>
    </location>
</feature>
<proteinExistence type="evidence at protein level"/>
<protein>
    <recommendedName>
        <fullName>ATP-dependent protease ATPase subunit HslU</fullName>
    </recommendedName>
    <alternativeName>
        <fullName>Unfoldase HslU</fullName>
    </alternativeName>
</protein>
<organism>
    <name type="scientific">Haemophilus influenzae (strain ATCC 51907 / DSM 11121 / KW20 / Rd)</name>
    <dbReference type="NCBI Taxonomy" id="71421"/>
    <lineage>
        <taxon>Bacteria</taxon>
        <taxon>Pseudomonadati</taxon>
        <taxon>Pseudomonadota</taxon>
        <taxon>Gammaproteobacteria</taxon>
        <taxon>Pasteurellales</taxon>
        <taxon>Pasteurellaceae</taxon>
        <taxon>Haemophilus</taxon>
    </lineage>
</organism>
<keyword id="KW-0002">3D-structure</keyword>
<keyword id="KW-0067">ATP-binding</keyword>
<keyword id="KW-0143">Chaperone</keyword>
<keyword id="KW-0963">Cytoplasm</keyword>
<keyword id="KW-0547">Nucleotide-binding</keyword>
<keyword id="KW-1185">Reference proteome</keyword>
<evidence type="ECO:0000250" key="1"/>
<evidence type="ECO:0000256" key="2">
    <source>
        <dbReference type="SAM" id="MobiDB-lite"/>
    </source>
</evidence>
<evidence type="ECO:0000269" key="3">
    <source>
    </source>
</evidence>
<evidence type="ECO:0000269" key="4">
    <source>
    </source>
</evidence>
<evidence type="ECO:0000269" key="5">
    <source>
    </source>
</evidence>
<evidence type="ECO:0000305" key="6"/>
<evidence type="ECO:0007829" key="7">
    <source>
        <dbReference type="PDB" id="1G3I"/>
    </source>
</evidence>
<evidence type="ECO:0007829" key="8">
    <source>
        <dbReference type="PDB" id="1G41"/>
    </source>
</evidence>
<evidence type="ECO:0007829" key="9">
    <source>
        <dbReference type="PDB" id="1IM2"/>
    </source>
</evidence>
<evidence type="ECO:0007829" key="10">
    <source>
        <dbReference type="PDB" id="1OFH"/>
    </source>
</evidence>
<comment type="function">
    <text>ATPase subunit of a proteasome-like degradation complex; this subunit has chaperone activity. The binding of ATP and its subsequent hydrolysis by HslU are essential for unfolding of protein substrates subsequently hydrolyzed by HslV. HslU recognizes the N-terminal part of its protein substrates and unfolds these before they are guided to HslV for hydrolysis.</text>
</comment>
<comment type="subunit">
    <text evidence="3 4 5">A double ring-shaped homohexamer of HslV is capped on each side by a ring-shaped HslU homohexamer. The assembly of the HslU/HslV complex is dependent on binding of ATP.</text>
</comment>
<comment type="interaction">
    <interactant intactId="EBI-1030296">
        <id>P43773</id>
    </interactant>
    <interactant intactId="EBI-1030290">
        <id>P43772</id>
        <label>hslV</label>
    </interactant>
    <organismsDiffer>false</organismsDiffer>
    <experiments>4</experiments>
</comment>
<comment type="subcellular location">
    <subcellularLocation>
        <location evidence="1">Cytoplasm</location>
    </subcellularLocation>
</comment>
<comment type="similarity">
    <text evidence="6">Belongs to the ClpX chaperone family. HslU subfamily.</text>
</comment>